<protein>
    <recommendedName>
        <fullName evidence="1">Urocanate hydratase</fullName>
        <shortName evidence="1">Urocanase</shortName>
        <ecNumber evidence="1">4.2.1.49</ecNumber>
    </recommendedName>
    <alternativeName>
        <fullName evidence="1">Imidazolonepropionate hydrolase</fullName>
    </alternativeName>
</protein>
<accession>B7V3J3</accession>
<gene>
    <name evidence="1" type="primary">hutU</name>
    <name type="ordered locus">PLES_54901</name>
</gene>
<proteinExistence type="inferred from homology"/>
<keyword id="KW-0963">Cytoplasm</keyword>
<keyword id="KW-0369">Histidine metabolism</keyword>
<keyword id="KW-0456">Lyase</keyword>
<keyword id="KW-0520">NAD</keyword>
<dbReference type="EC" id="4.2.1.49" evidence="1"/>
<dbReference type="EMBL" id="FM209186">
    <property type="protein sequence ID" value="CAW30244.1"/>
    <property type="molecule type" value="Genomic_DNA"/>
</dbReference>
<dbReference type="RefSeq" id="WP_003095958.1">
    <property type="nucleotide sequence ID" value="NC_011770.1"/>
</dbReference>
<dbReference type="SMR" id="B7V3J3"/>
<dbReference type="KEGG" id="pag:PLES_54901"/>
<dbReference type="HOGENOM" id="CLU_018868_0_1_6"/>
<dbReference type="UniPathway" id="UPA00379">
    <property type="reaction ID" value="UER00550"/>
</dbReference>
<dbReference type="GO" id="GO:0005737">
    <property type="term" value="C:cytoplasm"/>
    <property type="evidence" value="ECO:0007669"/>
    <property type="project" value="UniProtKB-SubCell"/>
</dbReference>
<dbReference type="GO" id="GO:0016153">
    <property type="term" value="F:urocanate hydratase activity"/>
    <property type="evidence" value="ECO:0007669"/>
    <property type="project" value="UniProtKB-UniRule"/>
</dbReference>
<dbReference type="GO" id="GO:0019556">
    <property type="term" value="P:L-histidine catabolic process to glutamate and formamide"/>
    <property type="evidence" value="ECO:0007669"/>
    <property type="project" value="UniProtKB-UniPathway"/>
</dbReference>
<dbReference type="GO" id="GO:0019557">
    <property type="term" value="P:L-histidine catabolic process to glutamate and formate"/>
    <property type="evidence" value="ECO:0007669"/>
    <property type="project" value="UniProtKB-UniPathway"/>
</dbReference>
<dbReference type="FunFam" id="3.40.50.10730:FF:000001">
    <property type="entry name" value="Urocanate hydratase"/>
    <property type="match status" value="1"/>
</dbReference>
<dbReference type="Gene3D" id="3.40.50.10730">
    <property type="entry name" value="Urocanase like domains"/>
    <property type="match status" value="1"/>
</dbReference>
<dbReference type="Gene3D" id="3.40.1770.10">
    <property type="entry name" value="Urocanase superfamily"/>
    <property type="match status" value="1"/>
</dbReference>
<dbReference type="HAMAP" id="MF_00577">
    <property type="entry name" value="HutU"/>
    <property type="match status" value="1"/>
</dbReference>
<dbReference type="InterPro" id="IPR055351">
    <property type="entry name" value="Urocanase"/>
</dbReference>
<dbReference type="InterPro" id="IPR023637">
    <property type="entry name" value="Urocanase-like"/>
</dbReference>
<dbReference type="InterPro" id="IPR035401">
    <property type="entry name" value="Urocanase_C"/>
</dbReference>
<dbReference type="InterPro" id="IPR038364">
    <property type="entry name" value="Urocanase_central_sf"/>
</dbReference>
<dbReference type="InterPro" id="IPR023636">
    <property type="entry name" value="Urocanase_CS"/>
</dbReference>
<dbReference type="InterPro" id="IPR035400">
    <property type="entry name" value="Urocanase_N"/>
</dbReference>
<dbReference type="InterPro" id="IPR035085">
    <property type="entry name" value="Urocanase_Rossmann-like"/>
</dbReference>
<dbReference type="InterPro" id="IPR036190">
    <property type="entry name" value="Urocanase_sf"/>
</dbReference>
<dbReference type="NCBIfam" id="TIGR01228">
    <property type="entry name" value="hutU"/>
    <property type="match status" value="1"/>
</dbReference>
<dbReference type="NCBIfam" id="NF003820">
    <property type="entry name" value="PRK05414.1"/>
    <property type="match status" value="1"/>
</dbReference>
<dbReference type="PANTHER" id="PTHR12216">
    <property type="entry name" value="UROCANATE HYDRATASE"/>
    <property type="match status" value="1"/>
</dbReference>
<dbReference type="PANTHER" id="PTHR12216:SF4">
    <property type="entry name" value="UROCANATE HYDRATASE"/>
    <property type="match status" value="1"/>
</dbReference>
<dbReference type="Pfam" id="PF01175">
    <property type="entry name" value="Urocanase"/>
    <property type="match status" value="1"/>
</dbReference>
<dbReference type="Pfam" id="PF17392">
    <property type="entry name" value="Urocanase_C"/>
    <property type="match status" value="1"/>
</dbReference>
<dbReference type="Pfam" id="PF17391">
    <property type="entry name" value="Urocanase_N"/>
    <property type="match status" value="1"/>
</dbReference>
<dbReference type="PIRSF" id="PIRSF001423">
    <property type="entry name" value="Urocanate_hydrat"/>
    <property type="match status" value="1"/>
</dbReference>
<dbReference type="SUPFAM" id="SSF111326">
    <property type="entry name" value="Urocanase"/>
    <property type="match status" value="1"/>
</dbReference>
<dbReference type="PROSITE" id="PS01233">
    <property type="entry name" value="UROCANASE"/>
    <property type="match status" value="1"/>
</dbReference>
<sequence length="559" mass="61179">MTTPSKFRDIEIRAPRGTTLTAKSWLTEAPLRMLMNNLDPEVAENPRELVVYGGIGRAARNWECYDRIVETLKQLNDDETLLVQSGKPVGVFKTHANAPRVLIANSNLVPHWATWEHFNELDAKGLAMYGQMTAGSWIYIGSQGIVQGTYETFVEAGRQHYDGNLKGRWVLTAGLGGMGGAQPLAATLAGACSLNIECQQSRIDFRLRSRYVDEQAKDLDDALARIQRYTAEGKAISIALLGNAAEILPELVRRGVRPDMVTDQTSAHDPLNGYLPAGWSWEEYRDRAQTDPAAVVKAAKQSMAVHVRAMLAFQQQGVPTFDYGNNIRQMAKEEGVANAFDFPGFVPAYIRPLFCRGIGPFRWAALSGDPQDIYKTDAKVKQLIPDDAHLHRWLDMARERISFQGLPARICWVGLGLRAKLGLAFNEMVRSGELSAPIVIGRDHLDSGSVASPNRETEAMQDGSDAVSDWPLLNALLNTASGATWVSLHHGGGVGMGFSQHSGMVIVCDGSDEAAERIARVLTNDPGTGVMRHADAGYQVAIDCAKEQGLNLPMITAQR</sequence>
<feature type="chain" id="PRO_1000129567" description="Urocanate hydratase">
    <location>
        <begin position="1"/>
        <end position="559"/>
    </location>
</feature>
<feature type="active site" evidence="1">
    <location>
        <position position="411"/>
    </location>
</feature>
<feature type="binding site" evidence="1">
    <location>
        <begin position="53"/>
        <end position="54"/>
    </location>
    <ligand>
        <name>NAD(+)</name>
        <dbReference type="ChEBI" id="CHEBI:57540"/>
    </ligand>
</feature>
<feature type="binding site" evidence="1">
    <location>
        <position position="131"/>
    </location>
    <ligand>
        <name>NAD(+)</name>
        <dbReference type="ChEBI" id="CHEBI:57540"/>
    </ligand>
</feature>
<feature type="binding site" evidence="1">
    <location>
        <begin position="177"/>
        <end position="179"/>
    </location>
    <ligand>
        <name>NAD(+)</name>
        <dbReference type="ChEBI" id="CHEBI:57540"/>
    </ligand>
</feature>
<feature type="binding site" evidence="1">
    <location>
        <position position="197"/>
    </location>
    <ligand>
        <name>NAD(+)</name>
        <dbReference type="ChEBI" id="CHEBI:57540"/>
    </ligand>
</feature>
<feature type="binding site" evidence="1">
    <location>
        <position position="202"/>
    </location>
    <ligand>
        <name>NAD(+)</name>
        <dbReference type="ChEBI" id="CHEBI:57540"/>
    </ligand>
</feature>
<feature type="binding site" evidence="1">
    <location>
        <begin position="243"/>
        <end position="244"/>
    </location>
    <ligand>
        <name>NAD(+)</name>
        <dbReference type="ChEBI" id="CHEBI:57540"/>
    </ligand>
</feature>
<feature type="binding site" evidence="1">
    <location>
        <begin position="264"/>
        <end position="268"/>
    </location>
    <ligand>
        <name>NAD(+)</name>
        <dbReference type="ChEBI" id="CHEBI:57540"/>
    </ligand>
</feature>
<feature type="binding site" evidence="1">
    <location>
        <begin position="274"/>
        <end position="275"/>
    </location>
    <ligand>
        <name>NAD(+)</name>
        <dbReference type="ChEBI" id="CHEBI:57540"/>
    </ligand>
</feature>
<feature type="binding site" evidence="1">
    <location>
        <position position="323"/>
    </location>
    <ligand>
        <name>NAD(+)</name>
        <dbReference type="ChEBI" id="CHEBI:57540"/>
    </ligand>
</feature>
<feature type="binding site" evidence="1">
    <location>
        <position position="493"/>
    </location>
    <ligand>
        <name>NAD(+)</name>
        <dbReference type="ChEBI" id="CHEBI:57540"/>
    </ligand>
</feature>
<evidence type="ECO:0000255" key="1">
    <source>
        <dbReference type="HAMAP-Rule" id="MF_00577"/>
    </source>
</evidence>
<name>HUTU_PSEA8</name>
<reference key="1">
    <citation type="journal article" date="2009" name="Genome Res.">
        <title>Newly introduced genomic prophage islands are critical determinants of in vivo competitiveness in the Liverpool epidemic strain of Pseudomonas aeruginosa.</title>
        <authorList>
            <person name="Winstanley C."/>
            <person name="Langille M.G.I."/>
            <person name="Fothergill J.L."/>
            <person name="Kukavica-Ibrulj I."/>
            <person name="Paradis-Bleau C."/>
            <person name="Sanschagrin F."/>
            <person name="Thomson N.R."/>
            <person name="Winsor G.L."/>
            <person name="Quail M.A."/>
            <person name="Lennard N."/>
            <person name="Bignell A."/>
            <person name="Clarke L."/>
            <person name="Seeger K."/>
            <person name="Saunders D."/>
            <person name="Harris D."/>
            <person name="Parkhill J."/>
            <person name="Hancock R.E.W."/>
            <person name="Brinkman F.S.L."/>
            <person name="Levesque R.C."/>
        </authorList>
    </citation>
    <scope>NUCLEOTIDE SEQUENCE [LARGE SCALE GENOMIC DNA]</scope>
    <source>
        <strain>LESB58</strain>
    </source>
</reference>
<organism>
    <name type="scientific">Pseudomonas aeruginosa (strain LESB58)</name>
    <dbReference type="NCBI Taxonomy" id="557722"/>
    <lineage>
        <taxon>Bacteria</taxon>
        <taxon>Pseudomonadati</taxon>
        <taxon>Pseudomonadota</taxon>
        <taxon>Gammaproteobacteria</taxon>
        <taxon>Pseudomonadales</taxon>
        <taxon>Pseudomonadaceae</taxon>
        <taxon>Pseudomonas</taxon>
    </lineage>
</organism>
<comment type="function">
    <text evidence="1">Catalyzes the conversion of urocanate to 4-imidazolone-5-propionate.</text>
</comment>
<comment type="catalytic activity">
    <reaction evidence="1">
        <text>4-imidazolone-5-propanoate = trans-urocanate + H2O</text>
        <dbReference type="Rhea" id="RHEA:13101"/>
        <dbReference type="ChEBI" id="CHEBI:15377"/>
        <dbReference type="ChEBI" id="CHEBI:17771"/>
        <dbReference type="ChEBI" id="CHEBI:77893"/>
        <dbReference type="EC" id="4.2.1.49"/>
    </reaction>
</comment>
<comment type="cofactor">
    <cofactor evidence="1">
        <name>NAD(+)</name>
        <dbReference type="ChEBI" id="CHEBI:57540"/>
    </cofactor>
    <text evidence="1">Binds 1 NAD(+) per subunit.</text>
</comment>
<comment type="pathway">
    <text evidence="1">Amino-acid degradation; L-histidine degradation into L-glutamate; N-formimidoyl-L-glutamate from L-histidine: step 2/3.</text>
</comment>
<comment type="subcellular location">
    <subcellularLocation>
        <location evidence="1">Cytoplasm</location>
    </subcellularLocation>
</comment>
<comment type="similarity">
    <text evidence="1">Belongs to the urocanase family.</text>
</comment>